<sequence>GSSGLISMPRV</sequence>
<proteinExistence type="evidence at protein level"/>
<comment type="function">
    <text evidence="4">Mediates visceral muscle contractile activity (myotropic activity).</text>
</comment>
<comment type="subcellular location">
    <subcellularLocation>
        <location evidence="4">Secreted</location>
    </subcellularLocation>
</comment>
<comment type="similarity">
    <text evidence="1">Belongs to the periviscerokinin family.</text>
</comment>
<feature type="peptide" id="PRO_0000378802" description="Periviscerokinin-2" evidence="2">
    <location>
        <begin position="1"/>
        <end position="11"/>
    </location>
</feature>
<feature type="modified residue" description="Valine amide" evidence="2">
    <location>
        <position position="11"/>
    </location>
</feature>
<dbReference type="GO" id="GO:0005576">
    <property type="term" value="C:extracellular region"/>
    <property type="evidence" value="ECO:0007669"/>
    <property type="project" value="UniProtKB-SubCell"/>
</dbReference>
<dbReference type="GO" id="GO:0007218">
    <property type="term" value="P:neuropeptide signaling pathway"/>
    <property type="evidence" value="ECO:0007669"/>
    <property type="project" value="UniProtKB-KW"/>
</dbReference>
<dbReference type="InterPro" id="IPR013231">
    <property type="entry name" value="Periviscerokinin"/>
</dbReference>
<dbReference type="Pfam" id="PF08259">
    <property type="entry name" value="Periviscerokin"/>
    <property type="match status" value="1"/>
</dbReference>
<organism>
    <name type="scientific">Panchlora viridis</name>
    <name type="common">Cockroach</name>
    <dbReference type="NCBI Taxonomy" id="344693"/>
    <lineage>
        <taxon>Eukaryota</taxon>
        <taxon>Metazoa</taxon>
        <taxon>Ecdysozoa</taxon>
        <taxon>Arthropoda</taxon>
        <taxon>Hexapoda</taxon>
        <taxon>Insecta</taxon>
        <taxon>Pterygota</taxon>
        <taxon>Neoptera</taxon>
        <taxon>Polyneoptera</taxon>
        <taxon>Dictyoptera</taxon>
        <taxon>Blattodea</taxon>
        <taxon>Blaberoidea</taxon>
        <taxon>Blaberidae</taxon>
        <taxon>Panchlorinae</taxon>
        <taxon>Panchlora</taxon>
    </lineage>
</organism>
<keyword id="KW-0027">Amidation</keyword>
<keyword id="KW-0903">Direct protein sequencing</keyword>
<keyword id="KW-0527">Neuropeptide</keyword>
<keyword id="KW-0964">Secreted</keyword>
<protein>
    <recommendedName>
        <fullName evidence="3">Periviscerokinin-2</fullName>
        <shortName evidence="3">PanVi-PVK-2</shortName>
    </recommendedName>
</protein>
<reference evidence="4" key="1">
    <citation type="journal article" date="2009" name="BMC Evol. Biol.">
        <title>A proteomic approach for studying insect phylogeny: CAPA peptides of ancient insect taxa (Dictyoptera, Blattoptera) as a test case.</title>
        <authorList>
            <person name="Roth S."/>
            <person name="Fromm B."/>
            <person name="Gaede G."/>
            <person name="Predel R."/>
        </authorList>
    </citation>
    <scope>PROTEIN SEQUENCE</scope>
    <scope>AMIDATION AT VAL-11</scope>
    <source>
        <tissue evidence="2">Abdominal perisympathetic organs</tissue>
    </source>
</reference>
<accession>P85699</accession>
<evidence type="ECO:0000255" key="1"/>
<evidence type="ECO:0000269" key="2">
    <source>
    </source>
</evidence>
<evidence type="ECO:0000303" key="3">
    <source>
    </source>
</evidence>
<evidence type="ECO:0000305" key="4"/>
<name>PVK2_PANVI</name>